<reference key="1">
    <citation type="journal article" date="2010" name="J. Bacteriol.">
        <title>Short-term signatures of evolutionary change in the Salmonella enterica serovar typhimurium 14028 genome.</title>
        <authorList>
            <person name="Jarvik T."/>
            <person name="Smillie C."/>
            <person name="Groisman E.A."/>
            <person name="Ochman H."/>
        </authorList>
    </citation>
    <scope>NUCLEOTIDE SEQUENCE [LARGE SCALE GENOMIC DNA]</scope>
    <source>
        <strain>14028s / SGSC 2262</strain>
    </source>
</reference>
<reference key="2">
    <citation type="journal article" date="2002" name="Mol. Microbiol.">
        <title>The Salmonella enterica sv. Typhimurium smvA, yddG and ompD (porin) genes are required for the efficient efflux of methyl viologen.</title>
        <authorList>
            <person name="Santiviago C.A."/>
            <person name="Fuentes J.A."/>
            <person name="Bueno S.M."/>
            <person name="Trombert A.N."/>
            <person name="Hildago A.A."/>
            <person name="Socias L.T."/>
            <person name="Youderian P."/>
            <person name="Mora G.C."/>
        </authorList>
    </citation>
    <scope>FUNCTION IN METHYL VIOLOGEN RESISTANCE</scope>
    <scope>DISRUPTION PHENOTYPE</scope>
    <source>
        <strain>14028s / SGSC 2262</strain>
    </source>
</reference>
<dbReference type="EMBL" id="CP001363">
    <property type="protein sequence ID" value="ACY88369.1"/>
    <property type="molecule type" value="Genomic_DNA"/>
</dbReference>
<dbReference type="RefSeq" id="WP_000769035.1">
    <property type="nucleotide sequence ID" value="NZ_CP043402.1"/>
</dbReference>
<dbReference type="SMR" id="D0ZXQ1"/>
<dbReference type="KEGG" id="seo:STM14_1898"/>
<dbReference type="PATRIC" id="fig|588858.6.peg.1809"/>
<dbReference type="HOGENOM" id="CLU_058202_0_0_6"/>
<dbReference type="BioCyc" id="SENT588858:STM14_RS08735-MONOMER"/>
<dbReference type="Proteomes" id="UP000002695">
    <property type="component" value="Chromosome"/>
</dbReference>
<dbReference type="GO" id="GO:0009279">
    <property type="term" value="C:cell outer membrane"/>
    <property type="evidence" value="ECO:0007669"/>
    <property type="project" value="UniProtKB-SubCell"/>
</dbReference>
<dbReference type="GO" id="GO:0046930">
    <property type="term" value="C:pore complex"/>
    <property type="evidence" value="ECO:0007669"/>
    <property type="project" value="UniProtKB-KW"/>
</dbReference>
<dbReference type="GO" id="GO:0015288">
    <property type="term" value="F:porin activity"/>
    <property type="evidence" value="ECO:0007669"/>
    <property type="project" value="UniProtKB-KW"/>
</dbReference>
<dbReference type="GO" id="GO:0034220">
    <property type="term" value="P:monoatomic ion transmembrane transport"/>
    <property type="evidence" value="ECO:0007669"/>
    <property type="project" value="InterPro"/>
</dbReference>
<dbReference type="CDD" id="cd00342">
    <property type="entry name" value="gram_neg_porins"/>
    <property type="match status" value="1"/>
</dbReference>
<dbReference type="Gene3D" id="2.40.160.10">
    <property type="entry name" value="Porin"/>
    <property type="match status" value="1"/>
</dbReference>
<dbReference type="InterPro" id="IPR050298">
    <property type="entry name" value="Gram-neg_bact_OMP"/>
</dbReference>
<dbReference type="InterPro" id="IPR033900">
    <property type="entry name" value="Gram_neg_porin_domain"/>
</dbReference>
<dbReference type="InterPro" id="IPR023614">
    <property type="entry name" value="Porin_dom_sf"/>
</dbReference>
<dbReference type="InterPro" id="IPR001897">
    <property type="entry name" value="Porin_gammaproteobac"/>
</dbReference>
<dbReference type="InterPro" id="IPR001702">
    <property type="entry name" value="Porin_Gram-ve"/>
</dbReference>
<dbReference type="InterPro" id="IPR013793">
    <property type="entry name" value="Porin_Gram-ve_CS"/>
</dbReference>
<dbReference type="NCBIfam" id="NF007841">
    <property type="entry name" value="PRK10554.1"/>
    <property type="match status" value="1"/>
</dbReference>
<dbReference type="PANTHER" id="PTHR34501:SF2">
    <property type="entry name" value="OUTER MEMBRANE PORIN F-RELATED"/>
    <property type="match status" value="1"/>
</dbReference>
<dbReference type="PANTHER" id="PTHR34501">
    <property type="entry name" value="PROTEIN YDDL-RELATED"/>
    <property type="match status" value="1"/>
</dbReference>
<dbReference type="Pfam" id="PF00267">
    <property type="entry name" value="Porin_1"/>
    <property type="match status" value="1"/>
</dbReference>
<dbReference type="PRINTS" id="PR00183">
    <property type="entry name" value="ECOLIPORIN"/>
</dbReference>
<dbReference type="PRINTS" id="PR00182">
    <property type="entry name" value="ECOLNEIPORIN"/>
</dbReference>
<dbReference type="SUPFAM" id="SSF56935">
    <property type="entry name" value="Porins"/>
    <property type="match status" value="1"/>
</dbReference>
<dbReference type="PROSITE" id="PS00576">
    <property type="entry name" value="GRAM_NEG_PORIN"/>
    <property type="match status" value="1"/>
</dbReference>
<gene>
    <name type="primary">ompD</name>
    <name type="synonym">nmpC</name>
    <name type="ordered locus">STM14_1898</name>
</gene>
<protein>
    <recommendedName>
        <fullName>Outer membrane porin protein OmpD</fullName>
    </recommendedName>
</protein>
<organism>
    <name type="scientific">Salmonella typhimurium (strain 14028s / SGSC 2262)</name>
    <dbReference type="NCBI Taxonomy" id="588858"/>
    <lineage>
        <taxon>Bacteria</taxon>
        <taxon>Pseudomonadati</taxon>
        <taxon>Pseudomonadota</taxon>
        <taxon>Gammaproteobacteria</taxon>
        <taxon>Enterobacterales</taxon>
        <taxon>Enterobacteriaceae</taxon>
        <taxon>Salmonella</taxon>
    </lineage>
</organism>
<keyword id="KW-0998">Cell outer membrane</keyword>
<keyword id="KW-0406">Ion transport</keyword>
<keyword id="KW-0472">Membrane</keyword>
<keyword id="KW-0626">Porin</keyword>
<keyword id="KW-0732">Signal</keyword>
<keyword id="KW-0812">Transmembrane</keyword>
<keyword id="KW-1134">Transmembrane beta strand</keyword>
<keyword id="KW-0813">Transport</keyword>
<accession>D0ZXQ1</accession>
<feature type="signal peptide" evidence="2">
    <location>
        <begin position="1"/>
        <end position="21"/>
    </location>
</feature>
<feature type="chain" id="PRO_0000415646" description="Outer membrane porin protein OmpD">
    <location>
        <begin position="22"/>
        <end position="362"/>
    </location>
</feature>
<sequence>MKLKLVAVAVTSLLAAGVVNAAEVYNKDGNKLDLYGKVHAQHYFSDDNGSDGDKTYARLGFKGETQINDQLTGFGQWEYEFKGNRTESQGADKDKTRLAFAGLKFADYGSFDYGRNYGVAYDIGAWTDVLPEFGGDTWTQTDVFMTGRTTGVATYRNTDFFGLVEGLNFAAQYQGKNDRDGAYESNGDGFGLSATYEYEGFGVGAAYAKSDRTNNQVKAASNLNAAGKNAEVWAAGLKYDANNIYLATTYSETLNMTTFGEDAAGDAFIANKTQNFEAVAQYQFDFGLRPSIAYLKSKGKNLGTYGDQDLVEYIDVGATYYFNKNMSTFVDYKINLLDDSDFTKAAKVSTDNIVAVGLNYQF</sequence>
<proteinExistence type="evidence at protein level"/>
<name>OMPD_SALT1</name>
<evidence type="ECO:0000250" key="1"/>
<evidence type="ECO:0000255" key="2"/>
<evidence type="ECO:0000269" key="3">
    <source>
    </source>
</evidence>
<evidence type="ECO:0000305" key="4"/>
<comment type="function">
    <text evidence="1 3">Forms pores that allow passive diffusion of small molecules across the outer membrane (By similarity). Required for resistance to methyl viologen.</text>
</comment>
<comment type="subunit">
    <text evidence="1">Homotrimer.</text>
</comment>
<comment type="subcellular location">
    <subcellularLocation>
        <location evidence="1">Cell outer membrane</location>
        <topology evidence="1">Multi-pass membrane protein</topology>
    </subcellularLocation>
</comment>
<comment type="disruption phenotype">
    <text evidence="3">Mutants show increased sensitivity to methyl viologen.</text>
</comment>
<comment type="similarity">
    <text evidence="4">Belongs to the Gram-negative porin family.</text>
</comment>